<feature type="chain" id="PRO_1000020815" description="Sulfur carrier protein FdhD">
    <location>
        <begin position="1"/>
        <end position="277"/>
    </location>
</feature>
<feature type="active site" description="Cysteine persulfide intermediate" evidence="1">
    <location>
        <position position="121"/>
    </location>
</feature>
<feature type="binding site" evidence="1">
    <location>
        <begin position="260"/>
        <end position="265"/>
    </location>
    <ligand>
        <name>Mo-bis(molybdopterin guanine dinucleotide)</name>
        <dbReference type="ChEBI" id="CHEBI:60539"/>
    </ligand>
</feature>
<proteinExistence type="inferred from homology"/>
<accession>Q1R420</accession>
<dbReference type="EMBL" id="CP000243">
    <property type="protein sequence ID" value="ABE09894.1"/>
    <property type="molecule type" value="Genomic_DNA"/>
</dbReference>
<dbReference type="RefSeq" id="WP_000753589.1">
    <property type="nucleotide sequence ID" value="NZ_CP064825.1"/>
</dbReference>
<dbReference type="SMR" id="Q1R420"/>
<dbReference type="GeneID" id="75174135"/>
<dbReference type="KEGG" id="eci:UTI89_C4482"/>
<dbReference type="HOGENOM" id="CLU_056887_2_0_6"/>
<dbReference type="Proteomes" id="UP000001952">
    <property type="component" value="Chromosome"/>
</dbReference>
<dbReference type="GO" id="GO:0005737">
    <property type="term" value="C:cytoplasm"/>
    <property type="evidence" value="ECO:0007669"/>
    <property type="project" value="UniProtKB-SubCell"/>
</dbReference>
<dbReference type="GO" id="GO:0097163">
    <property type="term" value="F:sulfur carrier activity"/>
    <property type="evidence" value="ECO:0007669"/>
    <property type="project" value="UniProtKB-UniRule"/>
</dbReference>
<dbReference type="GO" id="GO:0016783">
    <property type="term" value="F:sulfurtransferase activity"/>
    <property type="evidence" value="ECO:0007669"/>
    <property type="project" value="InterPro"/>
</dbReference>
<dbReference type="GO" id="GO:0006777">
    <property type="term" value="P:Mo-molybdopterin cofactor biosynthetic process"/>
    <property type="evidence" value="ECO:0007669"/>
    <property type="project" value="UniProtKB-UniRule"/>
</dbReference>
<dbReference type="FunFam" id="3.10.20.10:FF:000003">
    <property type="entry name" value="Sulfur carrier protein FdhD"/>
    <property type="match status" value="1"/>
</dbReference>
<dbReference type="FunFam" id="3.40.140.10:FF:000027">
    <property type="entry name" value="Sulfur carrier protein FdhD"/>
    <property type="match status" value="1"/>
</dbReference>
<dbReference type="Gene3D" id="3.10.20.10">
    <property type="match status" value="1"/>
</dbReference>
<dbReference type="Gene3D" id="3.40.140.10">
    <property type="entry name" value="Cytidine Deaminase, domain 2"/>
    <property type="match status" value="1"/>
</dbReference>
<dbReference type="HAMAP" id="MF_00187">
    <property type="entry name" value="FdhD"/>
    <property type="match status" value="1"/>
</dbReference>
<dbReference type="InterPro" id="IPR016193">
    <property type="entry name" value="Cytidine_deaminase-like"/>
</dbReference>
<dbReference type="InterPro" id="IPR003786">
    <property type="entry name" value="FdhD"/>
</dbReference>
<dbReference type="NCBIfam" id="TIGR00129">
    <property type="entry name" value="fdhD_narQ"/>
    <property type="match status" value="1"/>
</dbReference>
<dbReference type="PANTHER" id="PTHR30592">
    <property type="entry name" value="FORMATE DEHYDROGENASE"/>
    <property type="match status" value="1"/>
</dbReference>
<dbReference type="PANTHER" id="PTHR30592:SF1">
    <property type="entry name" value="SULFUR CARRIER PROTEIN FDHD"/>
    <property type="match status" value="1"/>
</dbReference>
<dbReference type="Pfam" id="PF02634">
    <property type="entry name" value="FdhD-NarQ"/>
    <property type="match status" value="1"/>
</dbReference>
<dbReference type="PIRSF" id="PIRSF015626">
    <property type="entry name" value="FdhD"/>
    <property type="match status" value="1"/>
</dbReference>
<dbReference type="SUPFAM" id="SSF53927">
    <property type="entry name" value="Cytidine deaminase-like"/>
    <property type="match status" value="1"/>
</dbReference>
<gene>
    <name evidence="1" type="primary">fdhD</name>
    <name type="ordered locus">UTI89_C4482</name>
</gene>
<evidence type="ECO:0000255" key="1">
    <source>
        <dbReference type="HAMAP-Rule" id="MF_00187"/>
    </source>
</evidence>
<keyword id="KW-0963">Cytoplasm</keyword>
<keyword id="KW-0501">Molybdenum cofactor biosynthesis</keyword>
<sequence length="277" mass="30532">MKKTQQKEIENVTNITGVRQIELWRRDDLQHPRLDEVAEEVPVALVYNGISHVVMMASPKDLEYFALGFSLSEGIIESPRDIFGMDVVPSCNGLEVQIELSSRRFMGLKERRRALAGRTGCGVCGVEQLNDIGKPVQPLPFTQTFDLNKLDDALRHLNDFQPVGQLTGCTHAAAWMLPSGELVGGHEDVGRHVALDKLLGRRSQEGESWQQGAVLVSSRASYEMVQKSAMCGVEILFAVSAATTLAVEVAERCNLTLVGFCKPGRATVYTHPQRLSN</sequence>
<organism>
    <name type="scientific">Escherichia coli (strain UTI89 / UPEC)</name>
    <dbReference type="NCBI Taxonomy" id="364106"/>
    <lineage>
        <taxon>Bacteria</taxon>
        <taxon>Pseudomonadati</taxon>
        <taxon>Pseudomonadota</taxon>
        <taxon>Gammaproteobacteria</taxon>
        <taxon>Enterobacterales</taxon>
        <taxon>Enterobacteriaceae</taxon>
        <taxon>Escherichia</taxon>
    </lineage>
</organism>
<comment type="function">
    <text evidence="1">Required for formate dehydrogenase (FDH) activity. Acts as a sulfur carrier protein that transfers sulfur from IscS to the molybdenum cofactor prior to its insertion into FDH.</text>
</comment>
<comment type="subcellular location">
    <subcellularLocation>
        <location evidence="1">Cytoplasm</location>
    </subcellularLocation>
</comment>
<comment type="similarity">
    <text evidence="1">Belongs to the FdhD family.</text>
</comment>
<reference key="1">
    <citation type="journal article" date="2006" name="Proc. Natl. Acad. Sci. U.S.A.">
        <title>Identification of genes subject to positive selection in uropathogenic strains of Escherichia coli: a comparative genomics approach.</title>
        <authorList>
            <person name="Chen S.L."/>
            <person name="Hung C.-S."/>
            <person name="Xu J."/>
            <person name="Reigstad C.S."/>
            <person name="Magrini V."/>
            <person name="Sabo A."/>
            <person name="Blasiar D."/>
            <person name="Bieri T."/>
            <person name="Meyer R.R."/>
            <person name="Ozersky P."/>
            <person name="Armstrong J.R."/>
            <person name="Fulton R.S."/>
            <person name="Latreille J.P."/>
            <person name="Spieth J."/>
            <person name="Hooton T.M."/>
            <person name="Mardis E.R."/>
            <person name="Hultgren S.J."/>
            <person name="Gordon J.I."/>
        </authorList>
    </citation>
    <scope>NUCLEOTIDE SEQUENCE [LARGE SCALE GENOMIC DNA]</scope>
    <source>
        <strain>UTI89 / UPEC</strain>
    </source>
</reference>
<name>FDHD_ECOUT</name>
<protein>
    <recommendedName>
        <fullName evidence="1">Sulfur carrier protein FdhD</fullName>
    </recommendedName>
</protein>